<sequence length="452" mass="51378">MSLSKLTQTCFSRHQAKTFIRLYSSDFKSLLGPPAVANPYADNGRTRFAPIVPINHGNVFASIKLPINETQEAIAFKSEVEEAPKVEKLEVESPKIEAEKVLSSPPPAPAPTSSAIDELNSLKDSLEKLESAASKSSSSSGGSSDNSDPGNAEEIEARRKRMERNTRIGAYVLFGGSIIGFISFCFYYGRAQRDEFGNVISDEFSGSFLAPFYRIANSFKLWRDYVVEPAREQLLPDPLPAPYLQPKYTIVIELKNILVHPEWTYKTGYRFLKRPALDYFLDVIGYPNFEVVIYSSESMMTAAPVVDSFDPKQRIMYKLFRDCTKYMNGHHVKDLSKLNRDLSKVIYIDFDAKSGQLNPENMLRVPEWKGNMDDTSLVDLAELLKTIHLSDAEDVRPMLQYYSQYDDPAKEFRRRAVYLSQQEEQKKQQPDDSSMLKRYSGRLFGSRRHVNA</sequence>
<protein>
    <recommendedName>
        <fullName>Mitochondrial import inner membrane translocase subunit TIM50</fullName>
    </recommendedName>
    <alternativeName>
        <fullName>Small C-terminal domain Phosphatase protein 4</fullName>
    </alternativeName>
</protein>
<organism>
    <name type="scientific">Caenorhabditis elegans</name>
    <dbReference type="NCBI Taxonomy" id="6239"/>
    <lineage>
        <taxon>Eukaryota</taxon>
        <taxon>Metazoa</taxon>
        <taxon>Ecdysozoa</taxon>
        <taxon>Nematoda</taxon>
        <taxon>Chromadorea</taxon>
        <taxon>Rhabditida</taxon>
        <taxon>Rhabditina</taxon>
        <taxon>Rhabditomorpha</taxon>
        <taxon>Rhabditoidea</taxon>
        <taxon>Rhabditidae</taxon>
        <taxon>Peloderinae</taxon>
        <taxon>Caenorhabditis</taxon>
    </lineage>
</organism>
<keyword id="KW-0472">Membrane</keyword>
<keyword id="KW-0496">Mitochondrion</keyword>
<keyword id="KW-0999">Mitochondrion inner membrane</keyword>
<keyword id="KW-0653">Protein transport</keyword>
<keyword id="KW-1185">Reference proteome</keyword>
<keyword id="KW-0809">Transit peptide</keyword>
<keyword id="KW-0811">Translocation</keyword>
<keyword id="KW-0812">Transmembrane</keyword>
<keyword id="KW-1133">Transmembrane helix</keyword>
<keyword id="KW-0813">Transport</keyword>
<reference key="1">
    <citation type="journal article" date="1998" name="Science">
        <title>Genome sequence of the nematode C. elegans: a platform for investigating biology.</title>
        <authorList>
            <consortium name="The C. elegans sequencing consortium"/>
        </authorList>
    </citation>
    <scope>NUCLEOTIDE SEQUENCE [LARGE SCALE GENOMIC DNA]</scope>
    <source>
        <strain>Bristol N2</strain>
    </source>
</reference>
<accession>Q22647</accession>
<feature type="transit peptide" description="Mitochondrion" evidence="2">
    <location>
        <begin position="1"/>
        <end position="23"/>
    </location>
</feature>
<feature type="chain" id="PRO_0000043120" description="Mitochondrial import inner membrane translocase subunit TIM50">
    <location>
        <begin position="24"/>
        <end position="452"/>
    </location>
</feature>
<feature type="topological domain" description="Mitochondrial matrix" evidence="2">
    <location>
        <begin position="24"/>
        <end position="167"/>
    </location>
</feature>
<feature type="transmembrane region" description="Helical" evidence="2">
    <location>
        <begin position="168"/>
        <end position="188"/>
    </location>
</feature>
<feature type="topological domain" description="Mitochondrial intermembrane" evidence="2">
    <location>
        <begin position="189"/>
        <end position="452"/>
    </location>
</feature>
<feature type="domain" description="FCP1 homology" evidence="3">
    <location>
        <begin position="243"/>
        <end position="387"/>
    </location>
</feature>
<feature type="region of interest" description="Disordered" evidence="4">
    <location>
        <begin position="96"/>
        <end position="115"/>
    </location>
</feature>
<feature type="region of interest" description="Disordered" evidence="4">
    <location>
        <begin position="130"/>
        <end position="153"/>
    </location>
</feature>
<feature type="compositionally biased region" description="Low complexity" evidence="4">
    <location>
        <begin position="131"/>
        <end position="144"/>
    </location>
</feature>
<comment type="function">
    <text evidence="1">Essential component of the TIM23 complex, a complex that mediates the translocation of transit peptide-containing proteins across the mitochondrial inner membrane.</text>
</comment>
<comment type="subcellular location">
    <subcellularLocation>
        <location evidence="1">Mitochondrion inner membrane</location>
        <topology evidence="1">Single-pass membrane protein</topology>
    </subcellularLocation>
</comment>
<comment type="similarity">
    <text evidence="5">Belongs to the TIM50 family.</text>
</comment>
<evidence type="ECO:0000250" key="1"/>
<evidence type="ECO:0000255" key="2"/>
<evidence type="ECO:0000255" key="3">
    <source>
        <dbReference type="PROSITE-ProRule" id="PRU00336"/>
    </source>
</evidence>
<evidence type="ECO:0000256" key="4">
    <source>
        <dbReference type="SAM" id="MobiDB-lite"/>
    </source>
</evidence>
<evidence type="ECO:0000305" key="5"/>
<dbReference type="EMBL" id="Z73098">
    <property type="protein sequence ID" value="CAA97339.1"/>
    <property type="molecule type" value="Genomic_DNA"/>
</dbReference>
<dbReference type="PIR" id="T25076">
    <property type="entry name" value="T25076"/>
</dbReference>
<dbReference type="RefSeq" id="NP_505722.1">
    <property type="nucleotide sequence ID" value="NM_073321.7"/>
</dbReference>
<dbReference type="SMR" id="Q22647"/>
<dbReference type="BioGRID" id="44510">
    <property type="interactions" value="5"/>
</dbReference>
<dbReference type="FunCoup" id="Q22647">
    <property type="interactions" value="1854"/>
</dbReference>
<dbReference type="STRING" id="6239.T21C9.12.1"/>
<dbReference type="PaxDb" id="6239-T21C9.12"/>
<dbReference type="PeptideAtlas" id="Q22647"/>
<dbReference type="EnsemblMetazoa" id="T21C9.12a.1">
    <property type="protein sequence ID" value="T21C9.12a.1"/>
    <property type="gene ID" value="WBGene00011897"/>
</dbReference>
<dbReference type="GeneID" id="179481"/>
<dbReference type="KEGG" id="cel:CELE_T21C9.12"/>
<dbReference type="UCSC" id="T21C9.12">
    <property type="organism name" value="c. elegans"/>
</dbReference>
<dbReference type="AGR" id="WB:WBGene00011897"/>
<dbReference type="CTD" id="179481"/>
<dbReference type="WormBase" id="T21C9.12a">
    <property type="protein sequence ID" value="CE06481"/>
    <property type="gene ID" value="WBGene00011897"/>
    <property type="gene designation" value="scpl-4"/>
</dbReference>
<dbReference type="eggNOG" id="KOG2832">
    <property type="taxonomic scope" value="Eukaryota"/>
</dbReference>
<dbReference type="GeneTree" id="ENSGT01040000240503"/>
<dbReference type="HOGENOM" id="CLU_685581_0_0_1"/>
<dbReference type="InParanoid" id="Q22647"/>
<dbReference type="OMA" id="QYYNQFE"/>
<dbReference type="OrthoDB" id="287041at2759"/>
<dbReference type="PhylomeDB" id="Q22647"/>
<dbReference type="PRO" id="PR:Q22647"/>
<dbReference type="Proteomes" id="UP000001940">
    <property type="component" value="Chromosome V"/>
</dbReference>
<dbReference type="Bgee" id="WBGene00011897">
    <property type="expression patterns" value="Expressed in germ line (C elegans) and 4 other cell types or tissues"/>
</dbReference>
<dbReference type="ExpressionAtlas" id="Q22647">
    <property type="expression patterns" value="baseline"/>
</dbReference>
<dbReference type="GO" id="GO:0005744">
    <property type="term" value="C:TIM23 mitochondrial import inner membrane translocase complex"/>
    <property type="evidence" value="ECO:0000318"/>
    <property type="project" value="GO_Central"/>
</dbReference>
<dbReference type="GO" id="GO:0030150">
    <property type="term" value="P:protein import into mitochondrial matrix"/>
    <property type="evidence" value="ECO:0000318"/>
    <property type="project" value="GO_Central"/>
</dbReference>
<dbReference type="CDD" id="cd07521">
    <property type="entry name" value="HAD_FCP1-like"/>
    <property type="match status" value="1"/>
</dbReference>
<dbReference type="FunFam" id="3.40.50.1000:FF:000019">
    <property type="entry name" value="Mitochondrial import inner membrane translocase subunit TIM50"/>
    <property type="match status" value="1"/>
</dbReference>
<dbReference type="Gene3D" id="3.40.50.1000">
    <property type="entry name" value="HAD superfamily/HAD-like"/>
    <property type="match status" value="1"/>
</dbReference>
<dbReference type="InterPro" id="IPR004274">
    <property type="entry name" value="FCP1_dom"/>
</dbReference>
<dbReference type="InterPro" id="IPR036412">
    <property type="entry name" value="HAD-like_sf"/>
</dbReference>
<dbReference type="InterPro" id="IPR023214">
    <property type="entry name" value="HAD_sf"/>
</dbReference>
<dbReference type="InterPro" id="IPR050365">
    <property type="entry name" value="TIM50"/>
</dbReference>
<dbReference type="PANTHER" id="PTHR12210">
    <property type="entry name" value="DULLARD PROTEIN PHOSPHATASE"/>
    <property type="match status" value="1"/>
</dbReference>
<dbReference type="Pfam" id="PF03031">
    <property type="entry name" value="NIF"/>
    <property type="match status" value="1"/>
</dbReference>
<dbReference type="SMART" id="SM00577">
    <property type="entry name" value="CPDc"/>
    <property type="match status" value="1"/>
</dbReference>
<dbReference type="SUPFAM" id="SSF56784">
    <property type="entry name" value="HAD-like"/>
    <property type="match status" value="1"/>
</dbReference>
<dbReference type="PROSITE" id="PS50969">
    <property type="entry name" value="FCP1"/>
    <property type="match status" value="1"/>
</dbReference>
<proteinExistence type="inferred from homology"/>
<name>TIM50_CAEEL</name>
<gene>
    <name type="primary">scpl-4</name>
    <name type="synonym">tim-50</name>
    <name type="ORF">T21C9.12</name>
</gene>